<comment type="function">
    <text>Negative regulator of multiple nitrogen catabolic genes including the allantoin pathway genes.</text>
</comment>
<comment type="subcellular location">
    <subcellularLocation>
        <location>Nucleus</location>
    </subcellularLocation>
</comment>
<comment type="induction">
    <text>Sensitive to nitrogen catabolite repression.</text>
</comment>
<reference key="1">
    <citation type="journal article" date="1991" name="Mol. Cell. Biol.">
        <title>Expression of the DAL80 gene, whose product is homologous to the GATA factors and is a negative regulator of multiple nitrogen catabolic genes in Saccharomyces cerevisiae, is sensitive to nitrogen catabolite repression.</title>
        <authorList>
            <person name="Cunningham T.S."/>
            <person name="Cooper T.G."/>
        </authorList>
    </citation>
    <scope>NUCLEOTIDE SEQUENCE [GENOMIC DNA]</scope>
</reference>
<reference key="2">
    <citation type="journal article" date="1992" name="Mol. Cell. Biol.">
        <authorList>
            <person name="Cunningham T.S."/>
            <person name="Cooper T.G."/>
        </authorList>
    </citation>
    <scope>ERRATUM OF PUBMED:1944286</scope>
</reference>
<reference key="3">
    <citation type="journal article" date="1992" name="Curr. Genet.">
        <title>The UGA43 negative regulatory gene of Saccharomyces cerevisiae contains both a GATA-1 type zinc finger and a putative leucine zipper.</title>
        <authorList>
            <person name="Coornaert D."/>
            <person name="Vissers S."/>
            <person name="Andre B."/>
            <person name="Grenson M."/>
        </authorList>
    </citation>
    <scope>NUCLEOTIDE SEQUENCE [GENOMIC DNA]</scope>
</reference>
<reference key="4">
    <citation type="journal article" date="1994" name="Nature">
        <title>Complete DNA sequence of yeast chromosome XI.</title>
        <authorList>
            <person name="Dujon B."/>
            <person name="Alexandraki D."/>
            <person name="Andre B."/>
            <person name="Ansorge W."/>
            <person name="Baladron V."/>
            <person name="Ballesta J.P.G."/>
            <person name="Banrevi A."/>
            <person name="Bolle P.-A."/>
            <person name="Bolotin-Fukuhara M."/>
            <person name="Bossier P."/>
            <person name="Bou G."/>
            <person name="Boyer J."/>
            <person name="Buitrago M.J."/>
            <person name="Cheret G."/>
            <person name="Colleaux L."/>
            <person name="Daignan-Fornier B."/>
            <person name="del Rey F."/>
            <person name="Dion C."/>
            <person name="Domdey H."/>
            <person name="Duesterhoeft A."/>
            <person name="Duesterhus S."/>
            <person name="Entian K.-D."/>
            <person name="Erfle H."/>
            <person name="Esteban P.F."/>
            <person name="Feldmann H."/>
            <person name="Fernandes L."/>
            <person name="Fobo G.M."/>
            <person name="Fritz C."/>
            <person name="Fukuhara H."/>
            <person name="Gabel C."/>
            <person name="Gaillon L."/>
            <person name="Garcia-Cantalejo J.M."/>
            <person name="Garcia-Ramirez J.J."/>
            <person name="Gent M.E."/>
            <person name="Ghazvini M."/>
            <person name="Goffeau A."/>
            <person name="Gonzalez A."/>
            <person name="Grothues D."/>
            <person name="Guerreiro P."/>
            <person name="Hegemann J.H."/>
            <person name="Hewitt N."/>
            <person name="Hilger F."/>
            <person name="Hollenberg C.P."/>
            <person name="Horaitis O."/>
            <person name="Indge K.J."/>
            <person name="Jacquier A."/>
            <person name="James C.M."/>
            <person name="Jauniaux J.-C."/>
            <person name="Jimenez A."/>
            <person name="Keuchel H."/>
            <person name="Kirchrath L."/>
            <person name="Kleine K."/>
            <person name="Koetter P."/>
            <person name="Legrain P."/>
            <person name="Liebl S."/>
            <person name="Louis E.J."/>
            <person name="Maia e Silva A."/>
            <person name="Marck C."/>
            <person name="Monnier A.-L."/>
            <person name="Moestl D."/>
            <person name="Mueller S."/>
            <person name="Obermaier B."/>
            <person name="Oliver S.G."/>
            <person name="Pallier C."/>
            <person name="Pascolo S."/>
            <person name="Pfeiffer F."/>
            <person name="Philippsen P."/>
            <person name="Planta R.J."/>
            <person name="Pohl F.M."/>
            <person name="Pohl T.M."/>
            <person name="Poehlmann R."/>
            <person name="Portetelle D."/>
            <person name="Purnelle B."/>
            <person name="Puzos V."/>
            <person name="Ramezani Rad M."/>
            <person name="Rasmussen S.W."/>
            <person name="Remacha M.A."/>
            <person name="Revuelta J.L."/>
            <person name="Richard G.-F."/>
            <person name="Rieger M."/>
            <person name="Rodrigues-Pousada C."/>
            <person name="Rose M."/>
            <person name="Rupp T."/>
            <person name="Santos M.A."/>
            <person name="Schwager C."/>
            <person name="Sensen C."/>
            <person name="Skala J."/>
            <person name="Soares H."/>
            <person name="Sor F."/>
            <person name="Stegemann J."/>
            <person name="Tettelin H."/>
            <person name="Thierry A."/>
            <person name="Tzermia M."/>
            <person name="Urrestarazu L.A."/>
            <person name="van Dyck L."/>
            <person name="van Vliet-Reedijk J.C."/>
            <person name="Valens M."/>
            <person name="Vandenbol M."/>
            <person name="Vilela C."/>
            <person name="Vissers S."/>
            <person name="von Wettstein D."/>
            <person name="Voss H."/>
            <person name="Wiemann S."/>
            <person name="Xu G."/>
            <person name="Zimmermann J."/>
            <person name="Haasemann M."/>
            <person name="Becker I."/>
            <person name="Mewes H.-W."/>
        </authorList>
    </citation>
    <scope>NUCLEOTIDE SEQUENCE [LARGE SCALE GENOMIC DNA]</scope>
    <source>
        <strain>ATCC 204508 / S288c</strain>
    </source>
</reference>
<reference key="5">
    <citation type="journal article" date="2014" name="G3 (Bethesda)">
        <title>The reference genome sequence of Saccharomyces cerevisiae: Then and now.</title>
        <authorList>
            <person name="Engel S.R."/>
            <person name="Dietrich F.S."/>
            <person name="Fisk D.G."/>
            <person name="Binkley G."/>
            <person name="Balakrishnan R."/>
            <person name="Costanzo M.C."/>
            <person name="Dwight S.S."/>
            <person name="Hitz B.C."/>
            <person name="Karra K."/>
            <person name="Nash R.S."/>
            <person name="Weng S."/>
            <person name="Wong E.D."/>
            <person name="Lloyd P."/>
            <person name="Skrzypek M.S."/>
            <person name="Miyasato S.R."/>
            <person name="Simison M."/>
            <person name="Cherry J.M."/>
        </authorList>
    </citation>
    <scope>GENOME REANNOTATION</scope>
    <source>
        <strain>ATCC 204508 / S288c</strain>
    </source>
</reference>
<sequence>MVLSDSLKLPSPTLSAAAGVDDCDGEDHPTCQNCFTVKTPLWRRDEHGTVLCNACGLFLKLHGEPRPISLKTDTIKSRNRKKLNNNNVNTNANTHSNDPNKIFKRKKRLLTTGGGSLPTNNPKVSILEKFMVSGSIKPLLKPKETVPNTKECSTQRGKFSLDPCEPSGKNYLYQINGSDIYTSNIELTRLPNLSTLLEPSPFSDSAVPEIELTWKLHNEEEVIKLKTKISELELVTDLYKKHIFQLNEKCKQLEVELHSRASVQSHPQH</sequence>
<name>DAL80_YEAST</name>
<evidence type="ECO:0000255" key="1">
    <source>
        <dbReference type="PROSITE-ProRule" id="PRU00094"/>
    </source>
</evidence>
<evidence type="ECO:0000305" key="2"/>
<organism>
    <name type="scientific">Saccharomyces cerevisiae (strain ATCC 204508 / S288c)</name>
    <name type="common">Baker's yeast</name>
    <dbReference type="NCBI Taxonomy" id="559292"/>
    <lineage>
        <taxon>Eukaryota</taxon>
        <taxon>Fungi</taxon>
        <taxon>Dikarya</taxon>
        <taxon>Ascomycota</taxon>
        <taxon>Saccharomycotina</taxon>
        <taxon>Saccharomycetes</taxon>
        <taxon>Saccharomycetales</taxon>
        <taxon>Saccharomycetaceae</taxon>
        <taxon>Saccharomyces</taxon>
    </lineage>
</organism>
<gene>
    <name type="primary">DAL80</name>
    <name type="synonym">UGA43</name>
    <name type="ordered locus">YKR034W</name>
</gene>
<protein>
    <recommendedName>
        <fullName>Nitrogen regulatory protein DAL80</fullName>
    </recommendedName>
    <alternativeName>
        <fullName>Regulatory protein UGA43</fullName>
    </alternativeName>
</protein>
<accession>P26343</accession>
<accession>D6VX97</accession>
<feature type="chain" id="PRO_0000083470" description="Nitrogen regulatory protein DAL80">
    <location>
        <begin position="1"/>
        <end position="269"/>
    </location>
</feature>
<feature type="zinc finger region" description="GATA-type" evidence="1">
    <location>
        <begin position="31"/>
        <end position="55"/>
    </location>
</feature>
<feature type="sequence conflict" description="In Ref. 3; CAA42757." evidence="2" ref="3">
    <original>S</original>
    <variation>L</variation>
    <location>
        <position position="6"/>
    </location>
</feature>
<feature type="sequence conflict" description="In Ref. 3; CAA42757." evidence="2" ref="3">
    <original>V</original>
    <variation>I</variation>
    <location>
        <position position="207"/>
    </location>
</feature>
<proteinExistence type="evidence at transcript level"/>
<keyword id="KW-0238">DNA-binding</keyword>
<keyword id="KW-0479">Metal-binding</keyword>
<keyword id="KW-0534">Nitrate assimilation</keyword>
<keyword id="KW-0539">Nucleus</keyword>
<keyword id="KW-1185">Reference proteome</keyword>
<keyword id="KW-0678">Repressor</keyword>
<keyword id="KW-0804">Transcription</keyword>
<keyword id="KW-0805">Transcription regulation</keyword>
<keyword id="KW-0862">Zinc</keyword>
<keyword id="KW-0863">Zinc-finger</keyword>
<dbReference type="EMBL" id="M77821">
    <property type="protein sequence ID" value="AAA34556.1"/>
    <property type="molecule type" value="Genomic_DNA"/>
</dbReference>
<dbReference type="EMBL" id="X60199">
    <property type="protein sequence ID" value="CAA42757.1"/>
    <property type="molecule type" value="Genomic_DNA"/>
</dbReference>
<dbReference type="EMBL" id="Z28259">
    <property type="protein sequence ID" value="CAA82107.1"/>
    <property type="molecule type" value="Genomic_DNA"/>
</dbReference>
<dbReference type="EMBL" id="Z28258">
    <property type="protein sequence ID" value="CAA82106.1"/>
    <property type="molecule type" value="Genomic_DNA"/>
</dbReference>
<dbReference type="EMBL" id="BK006944">
    <property type="protein sequence ID" value="DAA09187.1"/>
    <property type="molecule type" value="Genomic_DNA"/>
</dbReference>
<dbReference type="PIR" id="S22781">
    <property type="entry name" value="S22781"/>
</dbReference>
<dbReference type="RefSeq" id="NP_012959.1">
    <property type="nucleotide sequence ID" value="NM_001179824.1"/>
</dbReference>
<dbReference type="SMR" id="P26343"/>
<dbReference type="BioGRID" id="34165">
    <property type="interactions" value="103"/>
</dbReference>
<dbReference type="DIP" id="DIP-2094N"/>
<dbReference type="FunCoup" id="P26343">
    <property type="interactions" value="231"/>
</dbReference>
<dbReference type="IntAct" id="P26343">
    <property type="interactions" value="19"/>
</dbReference>
<dbReference type="STRING" id="4932.YKR034W"/>
<dbReference type="iPTMnet" id="P26343"/>
<dbReference type="PaxDb" id="4932-YKR034W"/>
<dbReference type="PeptideAtlas" id="P26343"/>
<dbReference type="EnsemblFungi" id="YKR034W_mRNA">
    <property type="protein sequence ID" value="YKR034W"/>
    <property type="gene ID" value="YKR034W"/>
</dbReference>
<dbReference type="GeneID" id="853904"/>
<dbReference type="KEGG" id="sce:YKR034W"/>
<dbReference type="AGR" id="SGD:S000001742"/>
<dbReference type="SGD" id="S000001742">
    <property type="gene designation" value="DAL80"/>
</dbReference>
<dbReference type="VEuPathDB" id="FungiDB:YKR034W"/>
<dbReference type="eggNOG" id="KOG1601">
    <property type="taxonomic scope" value="Eukaryota"/>
</dbReference>
<dbReference type="GeneTree" id="ENSGT00940000176497"/>
<dbReference type="HOGENOM" id="CLU_054982_0_0_1"/>
<dbReference type="InParanoid" id="P26343"/>
<dbReference type="OMA" id="CIAMEIK"/>
<dbReference type="OrthoDB" id="515401at2759"/>
<dbReference type="BioCyc" id="YEAST:G3O-32007-MONOMER"/>
<dbReference type="Reactome" id="R-SCE-9018519">
    <property type="pathway name" value="Estrogen-dependent gene expression"/>
</dbReference>
<dbReference type="BioGRID-ORCS" id="853904">
    <property type="hits" value="0 hits in 13 CRISPR screens"/>
</dbReference>
<dbReference type="PRO" id="PR:P26343"/>
<dbReference type="Proteomes" id="UP000002311">
    <property type="component" value="Chromosome XI"/>
</dbReference>
<dbReference type="RNAct" id="P26343">
    <property type="molecule type" value="protein"/>
</dbReference>
<dbReference type="GO" id="GO:0005634">
    <property type="term" value="C:nucleus"/>
    <property type="evidence" value="ECO:0000314"/>
    <property type="project" value="SGD"/>
</dbReference>
<dbReference type="GO" id="GO:0000981">
    <property type="term" value="F:DNA-binding transcription factor activity, RNA polymerase II-specific"/>
    <property type="evidence" value="ECO:0000314"/>
    <property type="project" value="SGD"/>
</dbReference>
<dbReference type="GO" id="GO:0000978">
    <property type="term" value="F:RNA polymerase II cis-regulatory region sequence-specific DNA binding"/>
    <property type="evidence" value="ECO:0000318"/>
    <property type="project" value="GO_Central"/>
</dbReference>
<dbReference type="GO" id="GO:0043565">
    <property type="term" value="F:sequence-specific DNA binding"/>
    <property type="evidence" value="ECO:0000314"/>
    <property type="project" value="SGD"/>
</dbReference>
<dbReference type="GO" id="GO:0008270">
    <property type="term" value="F:zinc ion binding"/>
    <property type="evidence" value="ECO:0007669"/>
    <property type="project" value="UniProtKB-KW"/>
</dbReference>
<dbReference type="GO" id="GO:0000122">
    <property type="term" value="P:negative regulation of transcription by RNA polymerase II"/>
    <property type="evidence" value="ECO:0000315"/>
    <property type="project" value="SGD"/>
</dbReference>
<dbReference type="GO" id="GO:0042128">
    <property type="term" value="P:nitrate assimilation"/>
    <property type="evidence" value="ECO:0007669"/>
    <property type="project" value="UniProtKB-KW"/>
</dbReference>
<dbReference type="GO" id="GO:0090295">
    <property type="term" value="P:nitrogen catabolite repression of transcription"/>
    <property type="evidence" value="ECO:0000315"/>
    <property type="project" value="SGD"/>
</dbReference>
<dbReference type="GO" id="GO:0045944">
    <property type="term" value="P:positive regulation of transcription by RNA polymerase II"/>
    <property type="evidence" value="ECO:0000318"/>
    <property type="project" value="GO_Central"/>
</dbReference>
<dbReference type="CDD" id="cd00202">
    <property type="entry name" value="ZnF_GATA"/>
    <property type="match status" value="1"/>
</dbReference>
<dbReference type="FunFam" id="3.30.50.10:FF:000007">
    <property type="entry name" value="Nitrogen regulatory AreA, N-terminal"/>
    <property type="match status" value="1"/>
</dbReference>
<dbReference type="Gene3D" id="3.30.50.10">
    <property type="entry name" value="Erythroid Transcription Factor GATA-1, subunit A"/>
    <property type="match status" value="1"/>
</dbReference>
<dbReference type="InterPro" id="IPR039355">
    <property type="entry name" value="Transcription_factor_GATA"/>
</dbReference>
<dbReference type="InterPro" id="IPR000679">
    <property type="entry name" value="Znf_GATA"/>
</dbReference>
<dbReference type="InterPro" id="IPR013088">
    <property type="entry name" value="Znf_NHR/GATA"/>
</dbReference>
<dbReference type="PANTHER" id="PTHR10071:SF281">
    <property type="entry name" value="BOX A-BINDING FACTOR-RELATED"/>
    <property type="match status" value="1"/>
</dbReference>
<dbReference type="PANTHER" id="PTHR10071">
    <property type="entry name" value="TRANSCRIPTION FACTOR GATA FAMILY MEMBER"/>
    <property type="match status" value="1"/>
</dbReference>
<dbReference type="Pfam" id="PF00320">
    <property type="entry name" value="GATA"/>
    <property type="match status" value="1"/>
</dbReference>
<dbReference type="PRINTS" id="PR00619">
    <property type="entry name" value="GATAZNFINGER"/>
</dbReference>
<dbReference type="SMART" id="SM00401">
    <property type="entry name" value="ZnF_GATA"/>
    <property type="match status" value="1"/>
</dbReference>
<dbReference type="SUPFAM" id="SSF57716">
    <property type="entry name" value="Glucocorticoid receptor-like (DNA-binding domain)"/>
    <property type="match status" value="1"/>
</dbReference>
<dbReference type="PROSITE" id="PS00344">
    <property type="entry name" value="GATA_ZN_FINGER_1"/>
    <property type="match status" value="1"/>
</dbReference>
<dbReference type="PROSITE" id="PS50114">
    <property type="entry name" value="GATA_ZN_FINGER_2"/>
    <property type="match status" value="1"/>
</dbReference>